<sequence>MSDINATRLPAWLVDCPCVGDDVNRLLTRGE</sequence>
<proteinExistence type="inferred from homology"/>
<accession>A8W7M6</accession>
<evidence type="ECO:0000250" key="1">
    <source>
        <dbReference type="UniProtKB" id="A0A067SLB9"/>
    </source>
</evidence>
<evidence type="ECO:0000250" key="2">
    <source>
        <dbReference type="UniProtKB" id="A8W7M4"/>
    </source>
</evidence>
<evidence type="ECO:0000250" key="3">
    <source>
        <dbReference type="UniProtKB" id="P85421"/>
    </source>
</evidence>
<evidence type="ECO:0000303" key="4">
    <source>
    </source>
</evidence>
<evidence type="ECO:0000305" key="5"/>
<evidence type="ECO:0000305" key="6">
    <source>
    </source>
</evidence>
<comment type="function">
    <text evidence="6">Major toxin that belongs to the bicyclic heptapeptides called phallotoxins (PubMed:18025465). Although structurally related to amatoxins, phallotoxins have a different mode of action, which is the stabilization of F-actin (PubMed:18025465). Phallotoxins are poisonous when administered parenterally, but not orally because of poor absorption (PubMed:18025465).</text>
</comment>
<comment type="PTM">
    <text evidence="1">Processed by the macrocyclase-peptidase enzyme POPB to yield a toxic cyclic heptapeptide (By similarity). POPB first removes 10 residues from the N-terminus (By similarity). Conformational trapping of the remaining peptide forces the enzyme to release this intermediate rather than proceed to macrocyclization (By similarity). The enzyme rebinds the remaining peptide in a different conformation and catalyzes macrocyclization of the N-terminal 7 residues (By similarity).</text>
</comment>
<comment type="similarity">
    <text evidence="5">Belongs to the MSDIN fungal toxin family.</text>
</comment>
<keyword id="KW-0883">Thioether bond</keyword>
<keyword id="KW-0800">Toxin</keyword>
<gene>
    <name type="primary">PHA1_2</name>
</gene>
<organism>
    <name type="scientific">Amanita bisporigera</name>
    <name type="common">Destroying angel</name>
    <dbReference type="NCBI Taxonomy" id="87325"/>
    <lineage>
        <taxon>Eukaryota</taxon>
        <taxon>Fungi</taxon>
        <taxon>Dikarya</taxon>
        <taxon>Basidiomycota</taxon>
        <taxon>Agaricomycotina</taxon>
        <taxon>Agaricomycetes</taxon>
        <taxon>Agaricomycetidae</taxon>
        <taxon>Agaricales</taxon>
        <taxon>Pluteineae</taxon>
        <taxon>Amanitaceae</taxon>
        <taxon>Amanita</taxon>
    </lineage>
</organism>
<protein>
    <recommendedName>
        <fullName evidence="4">Phallacidin proprotein 1</fullName>
    </recommendedName>
    <component>
        <recommendedName>
            <fullName evidence="4">Phallacidin</fullName>
        </recommendedName>
    </component>
</protein>
<dbReference type="EMBL" id="EU196141">
    <property type="protein sequence ID" value="ABW87770.1"/>
    <property type="molecule type" value="Genomic_DNA"/>
</dbReference>
<dbReference type="SMR" id="A8W7M6"/>
<dbReference type="GO" id="GO:0090729">
    <property type="term" value="F:toxin activity"/>
    <property type="evidence" value="ECO:0007669"/>
    <property type="project" value="UniProtKB-KW"/>
</dbReference>
<dbReference type="InterPro" id="IPR027582">
    <property type="entry name" value="Amanitin/phalloidin"/>
</dbReference>
<dbReference type="NCBIfam" id="TIGR04309">
    <property type="entry name" value="amanitin"/>
    <property type="match status" value="1"/>
</dbReference>
<reference key="1">
    <citation type="journal article" date="2007" name="Proc. Natl. Acad. Sci. U.S.A.">
        <title>Gene family encoding the major toxins of lethal Amanita mushrooms.</title>
        <authorList>
            <person name="Hallen H.E."/>
            <person name="Luo H."/>
            <person name="Scott-Craig J.S."/>
            <person name="Walton J.D."/>
        </authorList>
    </citation>
    <scope>NUCLEOTIDE SEQUENCE [GENOMIC DNA]</scope>
    <scope>FUNCTION</scope>
</reference>
<name>PHAT2_AMABI</name>
<feature type="propeptide" id="PRO_0000443611" evidence="6">
    <location>
        <begin position="1"/>
        <end position="10"/>
    </location>
</feature>
<feature type="peptide" id="PRO_0000443612" description="Phallacidin" evidence="6">
    <location>
        <begin position="11"/>
        <end position="17"/>
    </location>
</feature>
<feature type="propeptide" id="PRO_0000443613" evidence="6">
    <location>
        <begin position="18"/>
        <end position="31"/>
    </location>
</feature>
<feature type="cross-link" description="Cyclopeptide (Ala-Pro)" evidence="2">
    <location>
        <begin position="11"/>
        <end position="17"/>
    </location>
</feature>
<feature type="cross-link" description="2'-cysteinyl-6'-hydroxytryptophan sulfoxide (Trp-Cys)" evidence="3">
    <location>
        <begin position="12"/>
        <end position="16"/>
    </location>
</feature>
<feature type="non-terminal residue" evidence="5">
    <location>
        <position position="31"/>
    </location>
</feature>